<proteinExistence type="inferred from homology"/>
<feature type="chain" id="PRO_0000101557" description="Ribosomal RNA small subunit methyltransferase A">
    <location>
        <begin position="1"/>
        <end position="266"/>
    </location>
</feature>
<feature type="binding site" evidence="1">
    <location>
        <position position="10"/>
    </location>
    <ligand>
        <name>S-adenosyl-L-methionine</name>
        <dbReference type="ChEBI" id="CHEBI:59789"/>
    </ligand>
</feature>
<feature type="binding site" evidence="1">
    <location>
        <position position="12"/>
    </location>
    <ligand>
        <name>S-adenosyl-L-methionine</name>
        <dbReference type="ChEBI" id="CHEBI:59789"/>
    </ligand>
</feature>
<feature type="binding site" evidence="1">
    <location>
        <position position="37"/>
    </location>
    <ligand>
        <name>S-adenosyl-L-methionine</name>
        <dbReference type="ChEBI" id="CHEBI:59789"/>
    </ligand>
</feature>
<feature type="binding site" evidence="1">
    <location>
        <position position="58"/>
    </location>
    <ligand>
        <name>S-adenosyl-L-methionine</name>
        <dbReference type="ChEBI" id="CHEBI:59789"/>
    </ligand>
</feature>
<feature type="binding site" evidence="1">
    <location>
        <position position="82"/>
    </location>
    <ligand>
        <name>S-adenosyl-L-methionine</name>
        <dbReference type="ChEBI" id="CHEBI:59789"/>
    </ligand>
</feature>
<feature type="binding site" evidence="1">
    <location>
        <position position="105"/>
    </location>
    <ligand>
        <name>S-adenosyl-L-methionine</name>
        <dbReference type="ChEBI" id="CHEBI:59789"/>
    </ligand>
</feature>
<comment type="function">
    <text evidence="1">Specifically dimethylates two adjacent adenosines (A1518 and A1519) in the loop of a conserved hairpin near the 3'-end of 16S rRNA in the 30S particle. May play a critical role in biogenesis of 30S subunits.</text>
</comment>
<comment type="catalytic activity">
    <reaction evidence="1">
        <text>adenosine(1518)/adenosine(1519) in 16S rRNA + 4 S-adenosyl-L-methionine = N(6)-dimethyladenosine(1518)/N(6)-dimethyladenosine(1519) in 16S rRNA + 4 S-adenosyl-L-homocysteine + 4 H(+)</text>
        <dbReference type="Rhea" id="RHEA:19609"/>
        <dbReference type="Rhea" id="RHEA-COMP:10232"/>
        <dbReference type="Rhea" id="RHEA-COMP:10233"/>
        <dbReference type="ChEBI" id="CHEBI:15378"/>
        <dbReference type="ChEBI" id="CHEBI:57856"/>
        <dbReference type="ChEBI" id="CHEBI:59789"/>
        <dbReference type="ChEBI" id="CHEBI:74411"/>
        <dbReference type="ChEBI" id="CHEBI:74493"/>
        <dbReference type="EC" id="2.1.1.182"/>
    </reaction>
</comment>
<comment type="subcellular location">
    <subcellularLocation>
        <location evidence="1">Cytoplasm</location>
    </subcellularLocation>
</comment>
<comment type="similarity">
    <text evidence="1">Belongs to the class I-like SAM-binding methyltransferase superfamily. rRNA adenine N(6)-methyltransferase family. RsmA subfamily.</text>
</comment>
<comment type="sequence caution" evidence="2">
    <conflict type="frameshift">
        <sequence resource="EMBL-CDS" id="BAA03626"/>
    </conflict>
</comment>
<accession>P43038</accession>
<accession>Q2STA9</accession>
<protein>
    <recommendedName>
        <fullName evidence="1">Ribosomal RNA small subunit methyltransferase A</fullName>
        <ecNumber evidence="1">2.1.1.182</ecNumber>
    </recommendedName>
    <alternativeName>
        <fullName evidence="1">16S rRNA (adenine(1518)-N(6)/adenine(1519)-N(6))-dimethyltransferase</fullName>
    </alternativeName>
    <alternativeName>
        <fullName evidence="1">16S rRNA dimethyladenosine transferase</fullName>
    </alternativeName>
    <alternativeName>
        <fullName evidence="1">16S rRNA dimethylase</fullName>
    </alternativeName>
    <alternativeName>
        <fullName evidence="1">S-adenosylmethionine-6-N', N'-adenosyl(rRNA) dimethyltransferase</fullName>
    </alternativeName>
</protein>
<dbReference type="EC" id="2.1.1.182" evidence="1"/>
<dbReference type="EMBL" id="D14983">
    <property type="protein sequence ID" value="BAA03626.1"/>
    <property type="status" value="ALT_FRAME"/>
    <property type="molecule type" value="Genomic_DNA"/>
</dbReference>
<dbReference type="EMBL" id="CP000123">
    <property type="protein sequence ID" value="ABC01116.1"/>
    <property type="molecule type" value="Genomic_DNA"/>
</dbReference>
<dbReference type="PIR" id="S42117">
    <property type="entry name" value="S42117"/>
</dbReference>
<dbReference type="RefSeq" id="WP_011386909.1">
    <property type="nucleotide sequence ID" value="NC_007633.1"/>
</dbReference>
<dbReference type="SMR" id="P43038"/>
<dbReference type="GeneID" id="23779039"/>
<dbReference type="KEGG" id="mcp:MCAP_0004"/>
<dbReference type="HOGENOM" id="CLU_041220_0_0_14"/>
<dbReference type="PhylomeDB" id="P43038"/>
<dbReference type="Proteomes" id="UP000001928">
    <property type="component" value="Chromosome"/>
</dbReference>
<dbReference type="GO" id="GO:0005829">
    <property type="term" value="C:cytosol"/>
    <property type="evidence" value="ECO:0007669"/>
    <property type="project" value="TreeGrafter"/>
</dbReference>
<dbReference type="GO" id="GO:0052908">
    <property type="term" value="F:16S rRNA (adenine(1518)-N(6)/adenine(1519)-N(6))-dimethyltransferase activity"/>
    <property type="evidence" value="ECO:0007669"/>
    <property type="project" value="UniProtKB-EC"/>
</dbReference>
<dbReference type="GO" id="GO:0003723">
    <property type="term" value="F:RNA binding"/>
    <property type="evidence" value="ECO:0007669"/>
    <property type="project" value="UniProtKB-KW"/>
</dbReference>
<dbReference type="CDD" id="cd02440">
    <property type="entry name" value="AdoMet_MTases"/>
    <property type="match status" value="1"/>
</dbReference>
<dbReference type="Gene3D" id="1.10.8.100">
    <property type="entry name" value="Ribosomal RNA adenine dimethylase-like, domain 2"/>
    <property type="match status" value="1"/>
</dbReference>
<dbReference type="Gene3D" id="3.40.50.150">
    <property type="entry name" value="Vaccinia Virus protein VP39"/>
    <property type="match status" value="1"/>
</dbReference>
<dbReference type="HAMAP" id="MF_00607">
    <property type="entry name" value="16SrRNA_methyltr_A"/>
    <property type="match status" value="1"/>
</dbReference>
<dbReference type="InterPro" id="IPR001737">
    <property type="entry name" value="KsgA/Erm"/>
</dbReference>
<dbReference type="InterPro" id="IPR023165">
    <property type="entry name" value="rRNA_Ade_diMease-like_C"/>
</dbReference>
<dbReference type="InterPro" id="IPR020596">
    <property type="entry name" value="rRNA_Ade_Mease_Trfase_CS"/>
</dbReference>
<dbReference type="InterPro" id="IPR020598">
    <property type="entry name" value="rRNA_Ade_methylase_Trfase_N"/>
</dbReference>
<dbReference type="InterPro" id="IPR011530">
    <property type="entry name" value="rRNA_adenine_dimethylase"/>
</dbReference>
<dbReference type="InterPro" id="IPR029063">
    <property type="entry name" value="SAM-dependent_MTases_sf"/>
</dbReference>
<dbReference type="NCBIfam" id="TIGR00755">
    <property type="entry name" value="ksgA"/>
    <property type="match status" value="1"/>
</dbReference>
<dbReference type="PANTHER" id="PTHR11727">
    <property type="entry name" value="DIMETHYLADENOSINE TRANSFERASE"/>
    <property type="match status" value="1"/>
</dbReference>
<dbReference type="PANTHER" id="PTHR11727:SF7">
    <property type="entry name" value="DIMETHYLADENOSINE TRANSFERASE-RELATED"/>
    <property type="match status" value="1"/>
</dbReference>
<dbReference type="Pfam" id="PF00398">
    <property type="entry name" value="RrnaAD"/>
    <property type="match status" value="1"/>
</dbReference>
<dbReference type="SMART" id="SM00650">
    <property type="entry name" value="rADc"/>
    <property type="match status" value="1"/>
</dbReference>
<dbReference type="SUPFAM" id="SSF53335">
    <property type="entry name" value="S-adenosyl-L-methionine-dependent methyltransferases"/>
    <property type="match status" value="1"/>
</dbReference>
<dbReference type="PROSITE" id="PS01131">
    <property type="entry name" value="RRNA_A_DIMETH"/>
    <property type="match status" value="1"/>
</dbReference>
<dbReference type="PROSITE" id="PS51689">
    <property type="entry name" value="SAM_RNA_A_N6_MT"/>
    <property type="match status" value="1"/>
</dbReference>
<organism>
    <name type="scientific">Mycoplasma capricolum subsp. capricolum (strain California kid / ATCC 27343 / NCTC 10154)</name>
    <dbReference type="NCBI Taxonomy" id="340047"/>
    <lineage>
        <taxon>Bacteria</taxon>
        <taxon>Bacillati</taxon>
        <taxon>Mycoplasmatota</taxon>
        <taxon>Mollicutes</taxon>
        <taxon>Mycoplasmataceae</taxon>
        <taxon>Mycoplasma</taxon>
    </lineage>
</organism>
<name>RSMA_MYCCT</name>
<evidence type="ECO:0000255" key="1">
    <source>
        <dbReference type="HAMAP-Rule" id="MF_00607"/>
    </source>
</evidence>
<evidence type="ECO:0000305" key="2"/>
<sequence>MKAKKYYGQNFISDLNLINKIVDVLDQNKDQLIIEIGPGKGALTKELVKRFDKVVVIEIDQDMVEILKTKFNHSNLEIIQADVLEIDLKQLISKYDYKNISIISNTPYYITSEILFKTLQISDLLTKAVFMLQKEVALRICSNKNENNYNNLSIACQFYSQRNFEFVVNKKMFYPIPKVDSAIISLTFNNIYKKQINDDKKFIEFVRTLFNNKRKTILNNLNNIIQNKNKALEYLKMLNISSNLRPEQLDIDEYIKLFNLIYISNF</sequence>
<reference key="1">
    <citation type="journal article" date="1993" name="Nucleic Acids Res.">
        <title>Mapping of replication initiation site in Mycoplasma capricolum genome by two-dimensional gel-electrophoretic analysis.</title>
        <authorList>
            <person name="Miyata M."/>
            <person name="Sano K."/>
            <person name="Okada R."/>
            <person name="Fukumura T."/>
        </authorList>
    </citation>
    <scope>NUCLEOTIDE SEQUENCE [GENOMIC DNA]</scope>
</reference>
<reference key="2">
    <citation type="submission" date="2005-09" db="EMBL/GenBank/DDBJ databases">
        <authorList>
            <person name="Glass J.I."/>
            <person name="Lartigue C."/>
            <person name="Pfannkoch C."/>
            <person name="Baden-Tillson H."/>
            <person name="Smith H.O."/>
            <person name="Venter J.C."/>
            <person name="Roske K."/>
            <person name="Wise K.S."/>
            <person name="Calcutt M.J."/>
            <person name="Nelson W.C."/>
            <person name="Nierman W.C."/>
        </authorList>
    </citation>
    <scope>NUCLEOTIDE SEQUENCE [LARGE SCALE GENOMIC DNA]</scope>
    <source>
        <strain>California kid / ATCC 27343 / NCTC 10154</strain>
    </source>
</reference>
<keyword id="KW-0963">Cytoplasm</keyword>
<keyword id="KW-0489">Methyltransferase</keyword>
<keyword id="KW-0694">RNA-binding</keyword>
<keyword id="KW-0698">rRNA processing</keyword>
<keyword id="KW-0949">S-adenosyl-L-methionine</keyword>
<keyword id="KW-0808">Transferase</keyword>
<gene>
    <name evidence="1" type="primary">rsmA</name>
    <name evidence="1" type="synonym">ksgA</name>
    <name type="ordered locus">MCAP_0004</name>
</gene>